<dbReference type="EMBL" id="AE008922">
    <property type="protein sequence ID" value="AAM39328.1"/>
    <property type="molecule type" value="Genomic_DNA"/>
</dbReference>
<dbReference type="RefSeq" id="NP_635404.1">
    <property type="nucleotide sequence ID" value="NC_003902.1"/>
</dbReference>
<dbReference type="RefSeq" id="WP_011035267.1">
    <property type="nucleotide sequence ID" value="NC_003902.1"/>
</dbReference>
<dbReference type="SMR" id="P0C7L9"/>
<dbReference type="STRING" id="190485.XCC0009"/>
<dbReference type="EnsemblBacteria" id="AAM39328">
    <property type="protein sequence ID" value="AAM39328"/>
    <property type="gene ID" value="XCC0009"/>
</dbReference>
<dbReference type="GeneID" id="58011307"/>
<dbReference type="KEGG" id="xcc:XCC0009"/>
<dbReference type="PATRIC" id="fig|190485.4.peg.9"/>
<dbReference type="eggNOG" id="COG0811">
    <property type="taxonomic scope" value="Bacteria"/>
</dbReference>
<dbReference type="HOGENOM" id="CLU_053325_2_0_6"/>
<dbReference type="OrthoDB" id="9805133at2"/>
<dbReference type="Proteomes" id="UP000001010">
    <property type="component" value="Chromosome"/>
</dbReference>
<dbReference type="GO" id="GO:0005886">
    <property type="term" value="C:plasma membrane"/>
    <property type="evidence" value="ECO:0000318"/>
    <property type="project" value="GO_Central"/>
</dbReference>
<dbReference type="GO" id="GO:0017038">
    <property type="term" value="P:protein import"/>
    <property type="evidence" value="ECO:0000318"/>
    <property type="project" value="GO_Central"/>
</dbReference>
<dbReference type="InterPro" id="IPR050790">
    <property type="entry name" value="ExbB/TolQ_transport"/>
</dbReference>
<dbReference type="InterPro" id="IPR002898">
    <property type="entry name" value="MotA_ExbB_proton_chnl"/>
</dbReference>
<dbReference type="PANTHER" id="PTHR30625:SF14">
    <property type="entry name" value="BIOPOLYMER TRANSPORT PROTEIN EXBB"/>
    <property type="match status" value="1"/>
</dbReference>
<dbReference type="PANTHER" id="PTHR30625">
    <property type="entry name" value="PROTEIN TOLQ"/>
    <property type="match status" value="1"/>
</dbReference>
<dbReference type="Pfam" id="PF01618">
    <property type="entry name" value="MotA_ExbB"/>
    <property type="match status" value="1"/>
</dbReference>
<accession>P0C7L9</accession>
<accession>O34260</accession>
<proteinExistence type="inferred from homology"/>
<protein>
    <recommendedName>
        <fullName>Biopolymer transport protein ExbB</fullName>
    </recommendedName>
</protein>
<gene>
    <name type="primary">exbB</name>
    <name type="ordered locus">XCC0009</name>
</gene>
<comment type="function">
    <text evidence="1">Involved in the TonB-dependent energy-dependent transport of various receptor-bound substrates. Protects ExbD from proteolytic degradation and functionally stabilizes TonB (By similarity).</text>
</comment>
<comment type="subunit">
    <text evidence="1">The accessory proteins ExbB and ExbD seem to form a complex with TonB.</text>
</comment>
<comment type="subcellular location">
    <subcellularLocation>
        <location>Cell inner membrane</location>
        <topology>Multi-pass membrane protein</topology>
    </subcellularLocation>
</comment>
<comment type="similarity">
    <text evidence="3">Belongs to the ExbB/TolQ family.</text>
</comment>
<evidence type="ECO:0000250" key="1"/>
<evidence type="ECO:0000255" key="2"/>
<evidence type="ECO:0000305" key="3"/>
<keyword id="KW-0997">Cell inner membrane</keyword>
<keyword id="KW-1003">Cell membrane</keyword>
<keyword id="KW-0472">Membrane</keyword>
<keyword id="KW-0653">Protein transport</keyword>
<keyword id="KW-1185">Reference proteome</keyword>
<keyword id="KW-0812">Transmembrane</keyword>
<keyword id="KW-1133">Transmembrane helix</keyword>
<keyword id="KW-0813">Transport</keyword>
<feature type="chain" id="PRO_0000145814" description="Biopolymer transport protein ExbB">
    <location>
        <begin position="1"/>
        <end position="253"/>
    </location>
</feature>
<feature type="transmembrane region" description="Helical" evidence="2">
    <location>
        <begin position="39"/>
        <end position="59"/>
    </location>
</feature>
<feature type="transmembrane region" description="Helical" evidence="2">
    <location>
        <begin position="163"/>
        <end position="183"/>
    </location>
</feature>
<feature type="transmembrane region" description="Helical" evidence="2">
    <location>
        <begin position="204"/>
        <end position="224"/>
    </location>
</feature>
<sequence>MLQEFVIAAAAGGSNPSAALSQMGFEHLITEMTSSPGDFAVSWVVLITLIAMSAASWYWTVINIFRATRLKSAADRVTTAFWDAPNAQDAIRAMEEQPASEPFSKIALDAAQAAAHHQRAEGSTGGMGESLSRSEFVDRALRQAVTRESTKLQSGMTLLATVGATAPFVGLLGTVWGIYGALIKIGATGSASIDAVAGPVGEALIMTAIGLFVAIPAVFAFNFFSKVNSSVIAKFDTFAHDLHDFFATGSRVR</sequence>
<reference key="1">
    <citation type="journal article" date="2002" name="Nature">
        <title>Comparison of the genomes of two Xanthomonas pathogens with differing host specificities.</title>
        <authorList>
            <person name="da Silva A.C.R."/>
            <person name="Ferro J.A."/>
            <person name="Reinach F.C."/>
            <person name="Farah C.S."/>
            <person name="Furlan L.R."/>
            <person name="Quaggio R.B."/>
            <person name="Monteiro-Vitorello C.B."/>
            <person name="Van Sluys M.A."/>
            <person name="Almeida N.F. Jr."/>
            <person name="Alves L.M.C."/>
            <person name="do Amaral A.M."/>
            <person name="Bertolini M.C."/>
            <person name="Camargo L.E.A."/>
            <person name="Camarotte G."/>
            <person name="Cannavan F."/>
            <person name="Cardozo J."/>
            <person name="Chambergo F."/>
            <person name="Ciapina L.P."/>
            <person name="Cicarelli R.M.B."/>
            <person name="Coutinho L.L."/>
            <person name="Cursino-Santos J.R."/>
            <person name="El-Dorry H."/>
            <person name="Faria J.B."/>
            <person name="Ferreira A.J.S."/>
            <person name="Ferreira R.C.C."/>
            <person name="Ferro M.I.T."/>
            <person name="Formighieri E.F."/>
            <person name="Franco M.C."/>
            <person name="Greggio C.C."/>
            <person name="Gruber A."/>
            <person name="Katsuyama A.M."/>
            <person name="Kishi L.T."/>
            <person name="Leite R.P."/>
            <person name="Lemos E.G.M."/>
            <person name="Lemos M.V.F."/>
            <person name="Locali E.C."/>
            <person name="Machado M.A."/>
            <person name="Madeira A.M.B.N."/>
            <person name="Martinez-Rossi N.M."/>
            <person name="Martins E.C."/>
            <person name="Meidanis J."/>
            <person name="Menck C.F.M."/>
            <person name="Miyaki C.Y."/>
            <person name="Moon D.H."/>
            <person name="Moreira L.M."/>
            <person name="Novo M.T.M."/>
            <person name="Okura V.K."/>
            <person name="Oliveira M.C."/>
            <person name="Oliveira V.R."/>
            <person name="Pereira H.A."/>
            <person name="Rossi A."/>
            <person name="Sena J.A.D."/>
            <person name="Silva C."/>
            <person name="de Souza R.F."/>
            <person name="Spinola L.A.F."/>
            <person name="Takita M.A."/>
            <person name="Tamura R.E."/>
            <person name="Teixeira E.C."/>
            <person name="Tezza R.I.D."/>
            <person name="Trindade dos Santos M."/>
            <person name="Truffi D."/>
            <person name="Tsai S.M."/>
            <person name="White F.F."/>
            <person name="Setubal J.C."/>
            <person name="Kitajima J.P."/>
        </authorList>
    </citation>
    <scope>NUCLEOTIDE SEQUENCE [LARGE SCALE GENOMIC DNA]</scope>
    <source>
        <strain>ATCC 33913 / DSM 3586 / NCPPB 528 / LMG 568 / P 25</strain>
    </source>
</reference>
<name>EXBB_XANCP</name>
<organism>
    <name type="scientific">Xanthomonas campestris pv. campestris (strain ATCC 33913 / DSM 3586 / NCPPB 528 / LMG 568 / P 25)</name>
    <dbReference type="NCBI Taxonomy" id="190485"/>
    <lineage>
        <taxon>Bacteria</taxon>
        <taxon>Pseudomonadati</taxon>
        <taxon>Pseudomonadota</taxon>
        <taxon>Gammaproteobacteria</taxon>
        <taxon>Lysobacterales</taxon>
        <taxon>Lysobacteraceae</taxon>
        <taxon>Xanthomonas</taxon>
    </lineage>
</organism>